<accession>B8GWV5</accession>
<protein>
    <recommendedName>
        <fullName evidence="1">NADH-quinone oxidoreductase subunit B</fullName>
        <ecNumber evidence="1">7.1.1.-</ecNumber>
    </recommendedName>
    <alternativeName>
        <fullName evidence="1">NADH dehydrogenase I subunit B</fullName>
    </alternativeName>
    <alternativeName>
        <fullName evidence="1">NDH-1 subunit B</fullName>
    </alternativeName>
</protein>
<keyword id="KW-0004">4Fe-4S</keyword>
<keyword id="KW-0997">Cell inner membrane</keyword>
<keyword id="KW-1003">Cell membrane</keyword>
<keyword id="KW-0408">Iron</keyword>
<keyword id="KW-0411">Iron-sulfur</keyword>
<keyword id="KW-0472">Membrane</keyword>
<keyword id="KW-0479">Metal-binding</keyword>
<keyword id="KW-0520">NAD</keyword>
<keyword id="KW-0874">Quinone</keyword>
<keyword id="KW-1185">Reference proteome</keyword>
<keyword id="KW-1278">Translocase</keyword>
<keyword id="KW-0813">Transport</keyword>
<keyword id="KW-0830">Ubiquinone</keyword>
<proteinExistence type="inferred from homology"/>
<sequence length="200" mass="21938">MEEGRPRMGVIVPGNSSPVPALSAGRSTVEGYDPKLHDPFFDGVSQQLADKGFITAAADDLITWARTGSLMWMTFGLACCAVEMMQASMPRYDLERYGFAPRASPRQSDVMIVAGTLTNKMAPALRKVYDQMPEPRYVISMGSCANGGGYYYYSYSVVRGCDRVVPVDIYVPGCPPTAEALVYGVLQLQKKIRRTGTIER</sequence>
<feature type="chain" id="PRO_0000376167" description="NADH-quinone oxidoreductase subunit B">
    <location>
        <begin position="1"/>
        <end position="200"/>
    </location>
</feature>
<feature type="binding site" evidence="1">
    <location>
        <position position="79"/>
    </location>
    <ligand>
        <name>[4Fe-4S] cluster</name>
        <dbReference type="ChEBI" id="CHEBI:49883"/>
    </ligand>
</feature>
<feature type="binding site" evidence="1">
    <location>
        <position position="80"/>
    </location>
    <ligand>
        <name>[4Fe-4S] cluster</name>
        <dbReference type="ChEBI" id="CHEBI:49883"/>
    </ligand>
</feature>
<feature type="binding site" evidence="1">
    <location>
        <position position="144"/>
    </location>
    <ligand>
        <name>[4Fe-4S] cluster</name>
        <dbReference type="ChEBI" id="CHEBI:49883"/>
    </ligand>
</feature>
<feature type="binding site" evidence="1">
    <location>
        <position position="174"/>
    </location>
    <ligand>
        <name>[4Fe-4S] cluster</name>
        <dbReference type="ChEBI" id="CHEBI:49883"/>
    </ligand>
</feature>
<evidence type="ECO:0000255" key="1">
    <source>
        <dbReference type="HAMAP-Rule" id="MF_01356"/>
    </source>
</evidence>
<gene>
    <name evidence="1" type="primary">nuoB</name>
    <name type="ordered locus">CCNA_02032</name>
</gene>
<organism>
    <name type="scientific">Caulobacter vibrioides (strain NA1000 / CB15N)</name>
    <name type="common">Caulobacter crescentus</name>
    <dbReference type="NCBI Taxonomy" id="565050"/>
    <lineage>
        <taxon>Bacteria</taxon>
        <taxon>Pseudomonadati</taxon>
        <taxon>Pseudomonadota</taxon>
        <taxon>Alphaproteobacteria</taxon>
        <taxon>Caulobacterales</taxon>
        <taxon>Caulobacteraceae</taxon>
        <taxon>Caulobacter</taxon>
    </lineage>
</organism>
<dbReference type="EC" id="7.1.1.-" evidence="1"/>
<dbReference type="EMBL" id="CP001340">
    <property type="protein sequence ID" value="ACL95497.1"/>
    <property type="molecule type" value="Genomic_DNA"/>
</dbReference>
<dbReference type="RefSeq" id="WP_012640371.1">
    <property type="nucleotide sequence ID" value="NC_011916.1"/>
</dbReference>
<dbReference type="RefSeq" id="YP_002517405.1">
    <property type="nucleotide sequence ID" value="NC_011916.1"/>
</dbReference>
<dbReference type="SMR" id="B8GWV5"/>
<dbReference type="GeneID" id="7333360"/>
<dbReference type="KEGG" id="ccs:CCNA_02032"/>
<dbReference type="PATRIC" id="fig|565050.3.peg.1990"/>
<dbReference type="HOGENOM" id="CLU_055737_7_0_5"/>
<dbReference type="OrthoDB" id="9786737at2"/>
<dbReference type="PhylomeDB" id="B8GWV5"/>
<dbReference type="Proteomes" id="UP000001364">
    <property type="component" value="Chromosome"/>
</dbReference>
<dbReference type="GO" id="GO:0005886">
    <property type="term" value="C:plasma membrane"/>
    <property type="evidence" value="ECO:0007669"/>
    <property type="project" value="UniProtKB-SubCell"/>
</dbReference>
<dbReference type="GO" id="GO:0045271">
    <property type="term" value="C:respiratory chain complex I"/>
    <property type="evidence" value="ECO:0007669"/>
    <property type="project" value="TreeGrafter"/>
</dbReference>
<dbReference type="GO" id="GO:0051539">
    <property type="term" value="F:4 iron, 4 sulfur cluster binding"/>
    <property type="evidence" value="ECO:0007669"/>
    <property type="project" value="UniProtKB-KW"/>
</dbReference>
<dbReference type="GO" id="GO:0005506">
    <property type="term" value="F:iron ion binding"/>
    <property type="evidence" value="ECO:0007669"/>
    <property type="project" value="UniProtKB-UniRule"/>
</dbReference>
<dbReference type="GO" id="GO:0008137">
    <property type="term" value="F:NADH dehydrogenase (ubiquinone) activity"/>
    <property type="evidence" value="ECO:0007669"/>
    <property type="project" value="InterPro"/>
</dbReference>
<dbReference type="GO" id="GO:0050136">
    <property type="term" value="F:NADH:ubiquinone reductase (non-electrogenic) activity"/>
    <property type="evidence" value="ECO:0007669"/>
    <property type="project" value="UniProtKB-UniRule"/>
</dbReference>
<dbReference type="GO" id="GO:0048038">
    <property type="term" value="F:quinone binding"/>
    <property type="evidence" value="ECO:0007669"/>
    <property type="project" value="UniProtKB-KW"/>
</dbReference>
<dbReference type="GO" id="GO:0009060">
    <property type="term" value="P:aerobic respiration"/>
    <property type="evidence" value="ECO:0007669"/>
    <property type="project" value="TreeGrafter"/>
</dbReference>
<dbReference type="GO" id="GO:0015990">
    <property type="term" value="P:electron transport coupled proton transport"/>
    <property type="evidence" value="ECO:0007669"/>
    <property type="project" value="TreeGrafter"/>
</dbReference>
<dbReference type="FunFam" id="3.40.50.12280:FF:000001">
    <property type="entry name" value="NADH-quinone oxidoreductase subunit B 2"/>
    <property type="match status" value="1"/>
</dbReference>
<dbReference type="Gene3D" id="3.40.50.12280">
    <property type="match status" value="1"/>
</dbReference>
<dbReference type="HAMAP" id="MF_01356">
    <property type="entry name" value="NDH1_NuoB"/>
    <property type="match status" value="1"/>
</dbReference>
<dbReference type="InterPro" id="IPR006137">
    <property type="entry name" value="NADH_UbQ_OxRdtase-like_20kDa"/>
</dbReference>
<dbReference type="InterPro" id="IPR006138">
    <property type="entry name" value="NADH_UQ_OxRdtase_20Kd_su"/>
</dbReference>
<dbReference type="NCBIfam" id="TIGR01957">
    <property type="entry name" value="nuoB_fam"/>
    <property type="match status" value="1"/>
</dbReference>
<dbReference type="NCBIfam" id="NF005012">
    <property type="entry name" value="PRK06411.1"/>
    <property type="match status" value="1"/>
</dbReference>
<dbReference type="PANTHER" id="PTHR11995">
    <property type="entry name" value="NADH DEHYDROGENASE"/>
    <property type="match status" value="1"/>
</dbReference>
<dbReference type="PANTHER" id="PTHR11995:SF14">
    <property type="entry name" value="NADH DEHYDROGENASE [UBIQUINONE] IRON-SULFUR PROTEIN 7, MITOCHONDRIAL"/>
    <property type="match status" value="1"/>
</dbReference>
<dbReference type="Pfam" id="PF01058">
    <property type="entry name" value="Oxidored_q6"/>
    <property type="match status" value="1"/>
</dbReference>
<dbReference type="SUPFAM" id="SSF56770">
    <property type="entry name" value="HydA/Nqo6-like"/>
    <property type="match status" value="1"/>
</dbReference>
<dbReference type="PROSITE" id="PS01150">
    <property type="entry name" value="COMPLEX1_20K"/>
    <property type="match status" value="1"/>
</dbReference>
<reference key="1">
    <citation type="journal article" date="2010" name="J. Bacteriol.">
        <title>The genetic basis of laboratory adaptation in Caulobacter crescentus.</title>
        <authorList>
            <person name="Marks M.E."/>
            <person name="Castro-Rojas C.M."/>
            <person name="Teiling C."/>
            <person name="Du L."/>
            <person name="Kapatral V."/>
            <person name="Walunas T.L."/>
            <person name="Crosson S."/>
        </authorList>
    </citation>
    <scope>NUCLEOTIDE SEQUENCE [LARGE SCALE GENOMIC DNA]</scope>
    <source>
        <strain>NA1000 / CB15N</strain>
    </source>
</reference>
<name>NUOB_CAUVN</name>
<comment type="function">
    <text evidence="1">NDH-1 shuttles electrons from NADH, via FMN and iron-sulfur (Fe-S) centers, to quinones in the respiratory chain. The immediate electron acceptor for the enzyme in this species is believed to be ubiquinone. Couples the redox reaction to proton translocation (for every two electrons transferred, four hydrogen ions are translocated across the cytoplasmic membrane), and thus conserves the redox energy in a proton gradient.</text>
</comment>
<comment type="catalytic activity">
    <reaction evidence="1">
        <text>a quinone + NADH + 5 H(+)(in) = a quinol + NAD(+) + 4 H(+)(out)</text>
        <dbReference type="Rhea" id="RHEA:57888"/>
        <dbReference type="ChEBI" id="CHEBI:15378"/>
        <dbReference type="ChEBI" id="CHEBI:24646"/>
        <dbReference type="ChEBI" id="CHEBI:57540"/>
        <dbReference type="ChEBI" id="CHEBI:57945"/>
        <dbReference type="ChEBI" id="CHEBI:132124"/>
    </reaction>
</comment>
<comment type="cofactor">
    <cofactor evidence="1">
        <name>[4Fe-4S] cluster</name>
        <dbReference type="ChEBI" id="CHEBI:49883"/>
    </cofactor>
    <text evidence="1">Binds 1 [4Fe-4S] cluster.</text>
</comment>
<comment type="subunit">
    <text evidence="1">NDH-1 is composed of 14 different subunits. Subunits NuoB, C, D, E, F, and G constitute the peripheral sector of the complex.</text>
</comment>
<comment type="subcellular location">
    <subcellularLocation>
        <location evidence="1">Cell inner membrane</location>
        <topology evidence="1">Peripheral membrane protein</topology>
        <orientation evidence="1">Cytoplasmic side</orientation>
    </subcellularLocation>
</comment>
<comment type="similarity">
    <text evidence="1">Belongs to the complex I 20 kDa subunit family.</text>
</comment>